<evidence type="ECO:0000255" key="1">
    <source>
        <dbReference type="HAMAP-Rule" id="MF_00123"/>
    </source>
</evidence>
<gene>
    <name evidence="1" type="primary">argS</name>
    <name type="ordered locus">LBA1600</name>
</gene>
<organism>
    <name type="scientific">Lactobacillus acidophilus (strain ATCC 700396 / NCK56 / N2 / NCFM)</name>
    <dbReference type="NCBI Taxonomy" id="272621"/>
    <lineage>
        <taxon>Bacteria</taxon>
        <taxon>Bacillati</taxon>
        <taxon>Bacillota</taxon>
        <taxon>Bacilli</taxon>
        <taxon>Lactobacillales</taxon>
        <taxon>Lactobacillaceae</taxon>
        <taxon>Lactobacillus</taxon>
    </lineage>
</organism>
<sequence length="561" mass="63314">MDFKNEVVDLVSSQVDLPKEKITALIERPKNAKMGDYAFPAFILAKTMHKNPAIIAKDIAENLNSDNFANIQAVGPYVNFAIDHEKLIASTLKDVLAEKEHYGDQKLGEGNVPIDMSSPNIAKPMSMGHLRSTVIGNSIAKTMKKVGYTPIKINYLGDYGTQFGKLIAAYKHWGNEEDVKKDPIMSLFHYYVKFHKEAENNPELDNEGREWFKKLEDGDPEAVELWKWFREVSLKDFKRIYKELGVTFDSYNGEAFFNDKMQPVIDELKDKGLLHESRGAQVVDMGEDENPAIIVKSDGTSIYLTRDLAAAEWRMKEYNFVKMLYVVGNEQAQHFVELKTVLKKMGYDWADEIHHVPFGLITQGGKKLSTRKGNVVFLDQVLRDAVNLAKKQIQEKNPDLADQDQVAHDVGVGAVVFHDLKNDRLDNFDFDLDEVVRFEGDTGPYVQYTNARAQSVLRKAAAMGEKPSEGDFNINDDWAFAVAKDLADFPRIVARSAEKFEPSVIAKFALDLAKKFNKYYANVKILTKDDQIGARLALVQATSIVLTESLRLLGVNAPKEM</sequence>
<accession>Q5FIQ9</accession>
<reference key="1">
    <citation type="journal article" date="2005" name="Proc. Natl. Acad. Sci. U.S.A.">
        <title>Complete genome sequence of the probiotic lactic acid bacterium Lactobacillus acidophilus NCFM.</title>
        <authorList>
            <person name="Altermann E."/>
            <person name="Russell W.M."/>
            <person name="Azcarate-Peril M.A."/>
            <person name="Barrangou R."/>
            <person name="Buck B.L."/>
            <person name="McAuliffe O."/>
            <person name="Souther N."/>
            <person name="Dobson A."/>
            <person name="Duong T."/>
            <person name="Callanan M."/>
            <person name="Lick S."/>
            <person name="Hamrick A."/>
            <person name="Cano R."/>
            <person name="Klaenhammer T.R."/>
        </authorList>
    </citation>
    <scope>NUCLEOTIDE SEQUENCE [LARGE SCALE GENOMIC DNA]</scope>
    <source>
        <strain>ATCC 700396 / NCK56 / N2 / NCFM</strain>
    </source>
</reference>
<dbReference type="EC" id="6.1.1.19" evidence="1"/>
<dbReference type="EMBL" id="CP000033">
    <property type="protein sequence ID" value="AAV43415.1"/>
    <property type="molecule type" value="Genomic_DNA"/>
</dbReference>
<dbReference type="RefSeq" id="WP_003548463.1">
    <property type="nucleotide sequence ID" value="NC_006814.3"/>
</dbReference>
<dbReference type="RefSeq" id="YP_194446.1">
    <property type="nucleotide sequence ID" value="NC_006814.3"/>
</dbReference>
<dbReference type="SMR" id="Q5FIQ9"/>
<dbReference type="STRING" id="272621.LBA1600"/>
<dbReference type="GeneID" id="93289337"/>
<dbReference type="KEGG" id="lac:LBA1600"/>
<dbReference type="PATRIC" id="fig|272621.13.peg.1520"/>
<dbReference type="eggNOG" id="COG0018">
    <property type="taxonomic scope" value="Bacteria"/>
</dbReference>
<dbReference type="HOGENOM" id="CLU_006406_6_1_9"/>
<dbReference type="OrthoDB" id="9805987at2"/>
<dbReference type="BioCyc" id="LACI272621:G1G49-1562-MONOMER"/>
<dbReference type="Proteomes" id="UP000006381">
    <property type="component" value="Chromosome"/>
</dbReference>
<dbReference type="GO" id="GO:0005737">
    <property type="term" value="C:cytoplasm"/>
    <property type="evidence" value="ECO:0007669"/>
    <property type="project" value="UniProtKB-SubCell"/>
</dbReference>
<dbReference type="GO" id="GO:0004814">
    <property type="term" value="F:arginine-tRNA ligase activity"/>
    <property type="evidence" value="ECO:0007669"/>
    <property type="project" value="UniProtKB-UniRule"/>
</dbReference>
<dbReference type="GO" id="GO:0005524">
    <property type="term" value="F:ATP binding"/>
    <property type="evidence" value="ECO:0007669"/>
    <property type="project" value="UniProtKB-UniRule"/>
</dbReference>
<dbReference type="GO" id="GO:0006420">
    <property type="term" value="P:arginyl-tRNA aminoacylation"/>
    <property type="evidence" value="ECO:0007669"/>
    <property type="project" value="UniProtKB-UniRule"/>
</dbReference>
<dbReference type="CDD" id="cd07956">
    <property type="entry name" value="Anticodon_Ia_Arg"/>
    <property type="match status" value="1"/>
</dbReference>
<dbReference type="CDD" id="cd00671">
    <property type="entry name" value="ArgRS_core"/>
    <property type="match status" value="1"/>
</dbReference>
<dbReference type="FunFam" id="3.40.50.620:FF:000116">
    <property type="entry name" value="Arginine--tRNA ligase"/>
    <property type="match status" value="1"/>
</dbReference>
<dbReference type="Gene3D" id="3.30.1360.70">
    <property type="entry name" value="Arginyl tRNA synthetase N-terminal domain"/>
    <property type="match status" value="1"/>
</dbReference>
<dbReference type="Gene3D" id="3.40.50.620">
    <property type="entry name" value="HUPs"/>
    <property type="match status" value="1"/>
</dbReference>
<dbReference type="Gene3D" id="1.10.730.10">
    <property type="entry name" value="Isoleucyl-tRNA Synthetase, Domain 1"/>
    <property type="match status" value="1"/>
</dbReference>
<dbReference type="HAMAP" id="MF_00123">
    <property type="entry name" value="Arg_tRNA_synth"/>
    <property type="match status" value="1"/>
</dbReference>
<dbReference type="InterPro" id="IPR001278">
    <property type="entry name" value="Arg-tRNA-ligase"/>
</dbReference>
<dbReference type="InterPro" id="IPR005148">
    <property type="entry name" value="Arg-tRNA-synth_N"/>
</dbReference>
<dbReference type="InterPro" id="IPR036695">
    <property type="entry name" value="Arg-tRNA-synth_N_sf"/>
</dbReference>
<dbReference type="InterPro" id="IPR035684">
    <property type="entry name" value="ArgRS_core"/>
</dbReference>
<dbReference type="InterPro" id="IPR008909">
    <property type="entry name" value="DALR_anticod-bd"/>
</dbReference>
<dbReference type="InterPro" id="IPR014729">
    <property type="entry name" value="Rossmann-like_a/b/a_fold"/>
</dbReference>
<dbReference type="InterPro" id="IPR009080">
    <property type="entry name" value="tRNAsynth_Ia_anticodon-bd"/>
</dbReference>
<dbReference type="NCBIfam" id="TIGR00456">
    <property type="entry name" value="argS"/>
    <property type="match status" value="1"/>
</dbReference>
<dbReference type="PANTHER" id="PTHR11956:SF5">
    <property type="entry name" value="ARGININE--TRNA LIGASE, CYTOPLASMIC"/>
    <property type="match status" value="1"/>
</dbReference>
<dbReference type="PANTHER" id="PTHR11956">
    <property type="entry name" value="ARGINYL-TRNA SYNTHETASE"/>
    <property type="match status" value="1"/>
</dbReference>
<dbReference type="Pfam" id="PF03485">
    <property type="entry name" value="Arg_tRNA_synt_N"/>
    <property type="match status" value="1"/>
</dbReference>
<dbReference type="Pfam" id="PF05746">
    <property type="entry name" value="DALR_1"/>
    <property type="match status" value="1"/>
</dbReference>
<dbReference type="Pfam" id="PF00750">
    <property type="entry name" value="tRNA-synt_1d"/>
    <property type="match status" value="1"/>
</dbReference>
<dbReference type="PRINTS" id="PR01038">
    <property type="entry name" value="TRNASYNTHARG"/>
</dbReference>
<dbReference type="SMART" id="SM01016">
    <property type="entry name" value="Arg_tRNA_synt_N"/>
    <property type="match status" value="1"/>
</dbReference>
<dbReference type="SMART" id="SM00836">
    <property type="entry name" value="DALR_1"/>
    <property type="match status" value="1"/>
</dbReference>
<dbReference type="SUPFAM" id="SSF47323">
    <property type="entry name" value="Anticodon-binding domain of a subclass of class I aminoacyl-tRNA synthetases"/>
    <property type="match status" value="1"/>
</dbReference>
<dbReference type="SUPFAM" id="SSF55190">
    <property type="entry name" value="Arginyl-tRNA synthetase (ArgRS), N-terminal 'additional' domain"/>
    <property type="match status" value="1"/>
</dbReference>
<dbReference type="SUPFAM" id="SSF52374">
    <property type="entry name" value="Nucleotidylyl transferase"/>
    <property type="match status" value="1"/>
</dbReference>
<keyword id="KW-0030">Aminoacyl-tRNA synthetase</keyword>
<keyword id="KW-0067">ATP-binding</keyword>
<keyword id="KW-0963">Cytoplasm</keyword>
<keyword id="KW-0436">Ligase</keyword>
<keyword id="KW-0547">Nucleotide-binding</keyword>
<keyword id="KW-0648">Protein biosynthesis</keyword>
<keyword id="KW-1185">Reference proteome</keyword>
<protein>
    <recommendedName>
        <fullName evidence="1">Arginine--tRNA ligase</fullName>
        <ecNumber evidence="1">6.1.1.19</ecNumber>
    </recommendedName>
    <alternativeName>
        <fullName evidence="1">Arginyl-tRNA synthetase</fullName>
        <shortName evidence="1">ArgRS</shortName>
    </alternativeName>
</protein>
<feature type="chain" id="PRO_0000242034" description="Arginine--tRNA ligase">
    <location>
        <begin position="1"/>
        <end position="561"/>
    </location>
</feature>
<feature type="short sequence motif" description="'HIGH' region">
    <location>
        <begin position="119"/>
        <end position="129"/>
    </location>
</feature>
<proteinExistence type="inferred from homology"/>
<name>SYR_LACAC</name>
<comment type="catalytic activity">
    <reaction evidence="1">
        <text>tRNA(Arg) + L-arginine + ATP = L-arginyl-tRNA(Arg) + AMP + diphosphate</text>
        <dbReference type="Rhea" id="RHEA:20301"/>
        <dbReference type="Rhea" id="RHEA-COMP:9658"/>
        <dbReference type="Rhea" id="RHEA-COMP:9673"/>
        <dbReference type="ChEBI" id="CHEBI:30616"/>
        <dbReference type="ChEBI" id="CHEBI:32682"/>
        <dbReference type="ChEBI" id="CHEBI:33019"/>
        <dbReference type="ChEBI" id="CHEBI:78442"/>
        <dbReference type="ChEBI" id="CHEBI:78513"/>
        <dbReference type="ChEBI" id="CHEBI:456215"/>
        <dbReference type="EC" id="6.1.1.19"/>
    </reaction>
</comment>
<comment type="subunit">
    <text evidence="1">Monomer.</text>
</comment>
<comment type="subcellular location">
    <subcellularLocation>
        <location evidence="1">Cytoplasm</location>
    </subcellularLocation>
</comment>
<comment type="similarity">
    <text evidence="1">Belongs to the class-I aminoacyl-tRNA synthetase family.</text>
</comment>